<protein>
    <recommendedName>
        <fullName evidence="1">Small ribosomal subunit protein bS6</fullName>
    </recommendedName>
    <alternativeName>
        <fullName evidence="2">30S ribosomal protein S6</fullName>
    </alternativeName>
</protein>
<keyword id="KW-0687">Ribonucleoprotein</keyword>
<keyword id="KW-0689">Ribosomal protein</keyword>
<keyword id="KW-0694">RNA-binding</keyword>
<keyword id="KW-0699">rRNA-binding</keyword>
<name>RS6_CAMJD</name>
<accession>A7H2T4</accession>
<feature type="chain" id="PRO_1000005241" description="Small ribosomal subunit protein bS6">
    <location>
        <begin position="1"/>
        <end position="125"/>
    </location>
</feature>
<organism>
    <name type="scientific">Campylobacter jejuni subsp. doylei (strain ATCC BAA-1458 / RM4099 / 269.97)</name>
    <dbReference type="NCBI Taxonomy" id="360109"/>
    <lineage>
        <taxon>Bacteria</taxon>
        <taxon>Pseudomonadati</taxon>
        <taxon>Campylobacterota</taxon>
        <taxon>Epsilonproteobacteria</taxon>
        <taxon>Campylobacterales</taxon>
        <taxon>Campylobacteraceae</taxon>
        <taxon>Campylobacter</taxon>
    </lineage>
</organism>
<sequence>MKHYEVLFILKPTLTEEEVNAKLEFVKEVLTKNGAEIETVVPMGTRKLAYKIKKYERGTYFVIYFKAPTNLIAELERVLRITEEVIRFLIVKYENKKEIAAWEKLSHGIKQSKKEIKPLDAPEIQ</sequence>
<reference key="1">
    <citation type="submission" date="2007-07" db="EMBL/GenBank/DDBJ databases">
        <title>Complete genome sequence of Campylobacter jejuni subsp doylei 269.97 isolated from human blood.</title>
        <authorList>
            <person name="Fouts D.E."/>
            <person name="Mongodin E.F."/>
            <person name="Puiu D."/>
            <person name="Sebastian Y."/>
            <person name="Miller W.G."/>
            <person name="Mandrell R.E."/>
            <person name="Lastovica A.J."/>
            <person name="Nelson K.E."/>
        </authorList>
    </citation>
    <scope>NUCLEOTIDE SEQUENCE [LARGE SCALE GENOMIC DNA]</scope>
    <source>
        <strain>ATCC BAA-1458 / RM4099 / 269.97</strain>
    </source>
</reference>
<proteinExistence type="inferred from homology"/>
<comment type="function">
    <text evidence="1">Binds together with bS18 to 16S ribosomal RNA.</text>
</comment>
<comment type="similarity">
    <text evidence="1">Belongs to the bacterial ribosomal protein bS6 family.</text>
</comment>
<evidence type="ECO:0000255" key="1">
    <source>
        <dbReference type="HAMAP-Rule" id="MF_00360"/>
    </source>
</evidence>
<evidence type="ECO:0000305" key="2"/>
<gene>
    <name evidence="1" type="primary">rpsF</name>
    <name type="ordered locus">JJD26997_0653</name>
</gene>
<dbReference type="EMBL" id="CP000768">
    <property type="protein sequence ID" value="ABS43697.1"/>
    <property type="molecule type" value="Genomic_DNA"/>
</dbReference>
<dbReference type="SMR" id="A7H2T4"/>
<dbReference type="KEGG" id="cjd:JJD26997_0653"/>
<dbReference type="HOGENOM" id="CLU_113441_4_1_7"/>
<dbReference type="Proteomes" id="UP000002302">
    <property type="component" value="Chromosome"/>
</dbReference>
<dbReference type="GO" id="GO:0022627">
    <property type="term" value="C:cytosolic small ribosomal subunit"/>
    <property type="evidence" value="ECO:0007669"/>
    <property type="project" value="TreeGrafter"/>
</dbReference>
<dbReference type="GO" id="GO:0070181">
    <property type="term" value="F:small ribosomal subunit rRNA binding"/>
    <property type="evidence" value="ECO:0007669"/>
    <property type="project" value="TreeGrafter"/>
</dbReference>
<dbReference type="GO" id="GO:0003735">
    <property type="term" value="F:structural constituent of ribosome"/>
    <property type="evidence" value="ECO:0007669"/>
    <property type="project" value="InterPro"/>
</dbReference>
<dbReference type="GO" id="GO:0006412">
    <property type="term" value="P:translation"/>
    <property type="evidence" value="ECO:0007669"/>
    <property type="project" value="UniProtKB-UniRule"/>
</dbReference>
<dbReference type="CDD" id="cd00473">
    <property type="entry name" value="bS6"/>
    <property type="match status" value="1"/>
</dbReference>
<dbReference type="FunFam" id="3.30.70.60:FF:000010">
    <property type="entry name" value="30S ribosomal protein S6"/>
    <property type="match status" value="1"/>
</dbReference>
<dbReference type="Gene3D" id="3.30.70.60">
    <property type="match status" value="1"/>
</dbReference>
<dbReference type="HAMAP" id="MF_00360">
    <property type="entry name" value="Ribosomal_bS6"/>
    <property type="match status" value="1"/>
</dbReference>
<dbReference type="InterPro" id="IPR000529">
    <property type="entry name" value="Ribosomal_bS6"/>
</dbReference>
<dbReference type="InterPro" id="IPR035980">
    <property type="entry name" value="Ribosomal_bS6_sf"/>
</dbReference>
<dbReference type="InterPro" id="IPR020814">
    <property type="entry name" value="Ribosomal_S6_plastid/chlpt"/>
</dbReference>
<dbReference type="InterPro" id="IPR014717">
    <property type="entry name" value="Transl_elong_EF1B/ribsomal_bS6"/>
</dbReference>
<dbReference type="NCBIfam" id="TIGR00166">
    <property type="entry name" value="S6"/>
    <property type="match status" value="1"/>
</dbReference>
<dbReference type="PANTHER" id="PTHR21011">
    <property type="entry name" value="MITOCHONDRIAL 28S RIBOSOMAL PROTEIN S6"/>
    <property type="match status" value="1"/>
</dbReference>
<dbReference type="PANTHER" id="PTHR21011:SF1">
    <property type="entry name" value="SMALL RIBOSOMAL SUBUNIT PROTEIN BS6M"/>
    <property type="match status" value="1"/>
</dbReference>
<dbReference type="Pfam" id="PF01250">
    <property type="entry name" value="Ribosomal_S6"/>
    <property type="match status" value="1"/>
</dbReference>
<dbReference type="SUPFAM" id="SSF54995">
    <property type="entry name" value="Ribosomal protein S6"/>
    <property type="match status" value="1"/>
</dbReference>